<sequence>MDITASFLQDLVENKKAVPKIFSKTTLSNETSAKLFPYQKNHVLNLISILLKYFLVLDTSDTGVGKTYMAAAACRELGRKPIIVCPKTLIPNWASVLEFYGVKYYDIVNYETLKNEKTYKDSNFRVRKRCPYIKKVDNDGDYLKPAFEWKVPRNAIIIFDESHRCKDPSTENGKLLMSSKQLIQQNIPVMLLSATICESYSDMKIPFYLMNFIPHTRNFNEFVRTLKTKYPEYRVRNRQLDQAERKIAVENAQTLIIFKEIKEYTSRIRIRDLGNQFPDNQWCAQQFLSDDSDKIAEAYEEIAELMRELEEKKTQCKNHLAKIQKLKQEIELRKIPIFIEQTQLYLEQGKSVIIFVNYINTMNILSAQLNIKCRICGDQTQDQRQESIALFQANIEKIIICQIRAGGVGISLHDLHGGHPRVTLLNFPDSASDLLQALGRAPRSGAKSPVLQRIILVANVEYEKNIMRSINKKLANISAINDGDLEGHKYQVNEGRRRQRRVLNEPVNNPIEEPVNDPVKDPVEDLTDNQPNIVEV</sequence>
<evidence type="ECO:0000255" key="1"/>
<evidence type="ECO:0000255" key="2">
    <source>
        <dbReference type="PROSITE-ProRule" id="PRU00541"/>
    </source>
</evidence>
<evidence type="ECO:0000255" key="3">
    <source>
        <dbReference type="PROSITE-ProRule" id="PRU00542"/>
    </source>
</evidence>
<evidence type="ECO:0000256" key="4">
    <source>
        <dbReference type="SAM" id="MobiDB-lite"/>
    </source>
</evidence>
<evidence type="ECO:0000305" key="5"/>
<name>YL364_MIMIV</name>
<organismHost>
    <name type="scientific">Acanthamoeba polyphaga</name>
    <name type="common">Amoeba</name>
    <dbReference type="NCBI Taxonomy" id="5757"/>
</organismHost>
<organism>
    <name type="scientific">Acanthamoeba polyphaga mimivirus</name>
    <name type="common">APMV</name>
    <dbReference type="NCBI Taxonomy" id="212035"/>
    <lineage>
        <taxon>Viruses</taxon>
        <taxon>Varidnaviria</taxon>
        <taxon>Bamfordvirae</taxon>
        <taxon>Nucleocytoviricota</taxon>
        <taxon>Megaviricetes</taxon>
        <taxon>Imitervirales</taxon>
        <taxon>Mimiviridae</taxon>
        <taxon>Megamimivirinae</taxon>
        <taxon>Mimivirus</taxon>
        <taxon>Mimivirus bradfordmassiliense</taxon>
    </lineage>
</organism>
<dbReference type="EC" id="3.6.4.13"/>
<dbReference type="EMBL" id="AY653733">
    <property type="protein sequence ID" value="AAV50633.1"/>
    <property type="molecule type" value="Genomic_DNA"/>
</dbReference>
<dbReference type="SMR" id="Q5UR22"/>
<dbReference type="KEGG" id="vg:9924984"/>
<dbReference type="OrthoDB" id="26314at10239"/>
<dbReference type="Proteomes" id="UP000001134">
    <property type="component" value="Genome"/>
</dbReference>
<dbReference type="GO" id="GO:0005524">
    <property type="term" value="F:ATP binding"/>
    <property type="evidence" value="ECO:0007669"/>
    <property type="project" value="UniProtKB-KW"/>
</dbReference>
<dbReference type="GO" id="GO:0016887">
    <property type="term" value="F:ATP hydrolysis activity"/>
    <property type="evidence" value="ECO:0007669"/>
    <property type="project" value="RHEA"/>
</dbReference>
<dbReference type="GO" id="GO:0003677">
    <property type="term" value="F:DNA binding"/>
    <property type="evidence" value="ECO:0007669"/>
    <property type="project" value="InterPro"/>
</dbReference>
<dbReference type="GO" id="GO:0003724">
    <property type="term" value="F:RNA helicase activity"/>
    <property type="evidence" value="ECO:0007669"/>
    <property type="project" value="UniProtKB-EC"/>
</dbReference>
<dbReference type="GO" id="GO:0006281">
    <property type="term" value="P:DNA repair"/>
    <property type="evidence" value="ECO:0007669"/>
    <property type="project" value="TreeGrafter"/>
</dbReference>
<dbReference type="GO" id="GO:0031297">
    <property type="term" value="P:replication fork processing"/>
    <property type="evidence" value="ECO:0007669"/>
    <property type="project" value="TreeGrafter"/>
</dbReference>
<dbReference type="CDD" id="cd18793">
    <property type="entry name" value="SF2_C_SNF"/>
    <property type="match status" value="1"/>
</dbReference>
<dbReference type="Gene3D" id="3.40.50.300">
    <property type="entry name" value="P-loop containing nucleotide triphosphate hydrolases"/>
    <property type="match status" value="2"/>
</dbReference>
<dbReference type="InterPro" id="IPR006935">
    <property type="entry name" value="Helicase/UvrB_N"/>
</dbReference>
<dbReference type="InterPro" id="IPR014001">
    <property type="entry name" value="Helicase_ATP-bd"/>
</dbReference>
<dbReference type="InterPro" id="IPR001650">
    <property type="entry name" value="Helicase_C-like"/>
</dbReference>
<dbReference type="InterPro" id="IPR027417">
    <property type="entry name" value="P-loop_NTPase"/>
</dbReference>
<dbReference type="InterPro" id="IPR049730">
    <property type="entry name" value="SNF2/RAD54-like_C"/>
</dbReference>
<dbReference type="PANTHER" id="PTHR45766">
    <property type="entry name" value="DNA ANNEALING HELICASE AND ENDONUCLEASE ZRANB3 FAMILY MEMBER"/>
    <property type="match status" value="1"/>
</dbReference>
<dbReference type="PANTHER" id="PTHR45766:SF6">
    <property type="entry name" value="SWI_SNF-RELATED MATRIX-ASSOCIATED ACTIN-DEPENDENT REGULATOR OF CHROMATIN SUBFAMILY A-LIKE PROTEIN 1"/>
    <property type="match status" value="1"/>
</dbReference>
<dbReference type="Pfam" id="PF00271">
    <property type="entry name" value="Helicase_C"/>
    <property type="match status" value="1"/>
</dbReference>
<dbReference type="Pfam" id="PF04851">
    <property type="entry name" value="ResIII"/>
    <property type="match status" value="1"/>
</dbReference>
<dbReference type="SMART" id="SM00487">
    <property type="entry name" value="DEXDc"/>
    <property type="match status" value="1"/>
</dbReference>
<dbReference type="SUPFAM" id="SSF52540">
    <property type="entry name" value="P-loop containing nucleoside triphosphate hydrolases"/>
    <property type="match status" value="2"/>
</dbReference>
<dbReference type="PROSITE" id="PS51192">
    <property type="entry name" value="HELICASE_ATP_BIND_1"/>
    <property type="match status" value="1"/>
</dbReference>
<dbReference type="PROSITE" id="PS51194">
    <property type="entry name" value="HELICASE_CTER"/>
    <property type="match status" value="1"/>
</dbReference>
<accession>Q5UR22</accession>
<feature type="chain" id="PRO_0000247296" description="Putative ATP-dependent RNA helicase L364">
    <location>
        <begin position="1"/>
        <end position="536"/>
    </location>
</feature>
<feature type="domain" description="Helicase ATP-binding" evidence="2">
    <location>
        <begin position="47"/>
        <end position="214"/>
    </location>
</feature>
<feature type="domain" description="Helicase C-terminal" evidence="3">
    <location>
        <begin position="338"/>
        <end position="486"/>
    </location>
</feature>
<feature type="region of interest" description="Disordered" evidence="4">
    <location>
        <begin position="502"/>
        <end position="536"/>
    </location>
</feature>
<feature type="coiled-coil region" evidence="1">
    <location>
        <begin position="288"/>
        <end position="334"/>
    </location>
</feature>
<feature type="short sequence motif" description="DEAH box">
    <location>
        <begin position="160"/>
        <end position="163"/>
    </location>
</feature>
<feature type="binding site" evidence="2">
    <location>
        <begin position="60"/>
        <end position="67"/>
    </location>
    <ligand>
        <name>ATP</name>
        <dbReference type="ChEBI" id="CHEBI:30616"/>
    </ligand>
</feature>
<reference key="1">
    <citation type="journal article" date="2004" name="Science">
        <title>The 1.2-megabase genome sequence of Mimivirus.</title>
        <authorList>
            <person name="Raoult D."/>
            <person name="Audic S."/>
            <person name="Robert C."/>
            <person name="Abergel C."/>
            <person name="Renesto P."/>
            <person name="Ogata H."/>
            <person name="La Scola B."/>
            <person name="Susan M."/>
            <person name="Claverie J.-M."/>
        </authorList>
    </citation>
    <scope>NUCLEOTIDE SEQUENCE [LARGE SCALE GENOMIC DNA]</scope>
    <source>
        <strain>Rowbotham-Bradford</strain>
    </source>
</reference>
<comment type="catalytic activity">
    <reaction>
        <text>ATP + H2O = ADP + phosphate + H(+)</text>
        <dbReference type="Rhea" id="RHEA:13065"/>
        <dbReference type="ChEBI" id="CHEBI:15377"/>
        <dbReference type="ChEBI" id="CHEBI:15378"/>
        <dbReference type="ChEBI" id="CHEBI:30616"/>
        <dbReference type="ChEBI" id="CHEBI:43474"/>
        <dbReference type="ChEBI" id="CHEBI:456216"/>
        <dbReference type="EC" id="3.6.4.13"/>
    </reaction>
</comment>
<comment type="similarity">
    <text evidence="5">Belongs to the DEAD box helicase family. DEAH subfamily.</text>
</comment>
<proteinExistence type="inferred from homology"/>
<keyword id="KW-0067">ATP-binding</keyword>
<keyword id="KW-0175">Coiled coil</keyword>
<keyword id="KW-0347">Helicase</keyword>
<keyword id="KW-0378">Hydrolase</keyword>
<keyword id="KW-0547">Nucleotide-binding</keyword>
<keyword id="KW-1185">Reference proteome</keyword>
<gene>
    <name type="ordered locus">MIMI_L364</name>
</gene>
<protein>
    <recommendedName>
        <fullName>Putative ATP-dependent RNA helicase L364</fullName>
        <ecNumber>3.6.4.13</ecNumber>
    </recommendedName>
</protein>